<proteinExistence type="evidence at transcript level"/>
<gene>
    <name type="primary">IL1B</name>
</gene>
<comment type="function">
    <text evidence="2">Potent pro-inflammatory cytokine. Initially discovered as the major endogenous pyrogen, induces prostaglandin synthesis, neutrophil influx and activation, T-cell activation and cytokine production, B-cell activation and antibody production, and fibroblast proliferation and collagen production. Promotes Th17 differentiation of T-cells. Synergizes with IL12/interleukin-12 to induce IFNG synthesis from T-helper 1 (Th1) cells. Plays a role in angiogenesis by inducing VEGF production synergistically with TNF and IL6. Involved in transduction of inflammation downstream of pyroptosis: its mature form is specifically released in the extracellular milieu by passing through the gasdermin-D (GSDMD) pore.</text>
</comment>
<comment type="subunit">
    <text evidence="2">Monomer. In its precursor form, weakly interacts with full-length MEFV; the mature cytokine does not interact at all. Interacts with integrins ITGAV:ITGBV and ITGA5:ITGB1; integrin-binding is required for IL1B signaling. Interacts with cargo receptor TMED10; the interaction is direct and is required for the secretion of IL1B mature form. Interacts with HSP90AB1; the interaction facilitates cargo translocation into the ERGIC. Interacts with HSP90B1; the interaction facilitates cargo translocation into the ERGIC.</text>
</comment>
<comment type="subcellular location">
    <subcellularLocation>
        <location evidence="2">Cytoplasm</location>
        <location evidence="2">Cytosol</location>
    </subcellularLocation>
    <subcellularLocation>
        <location evidence="2">Secreted</location>
    </subcellularLocation>
    <subcellularLocation>
        <location evidence="2">Lysosome</location>
    </subcellularLocation>
    <subcellularLocation>
        <location evidence="3">Secreted</location>
        <location evidence="3">Extracellular exosome</location>
    </subcellularLocation>
    <text evidence="2">The precursor is cytosolic. In response to inflammasome-activating signals, such as ATP for NLRP3 inflammasome or bacterial flagellin for NLRC4 inflammasome, cleaved and secreted. Mature form is secreted and released in the extracellular milieu by passing through the gasdermin-D (GSDMD) pore. In contrast, the precursor form is not released, due to the presence of an acidic region that is proteolytically removed by CASP1 during maturation. The secretion is dependent on protein unfolding and facilitated by the cargo receptor TMED10.</text>
</comment>
<comment type="miscellaneous">
    <text evidence="1">IL1B production occurs in 2 steps, each being controlled by different stimuli. First, inflammatory signals, such as LPS, stimulate the synthesis and promote the accumulation of cytosolic stores of pro-IL1B (priming). Then additional signals are required for inflammasome assembly, leading to CASP1 activation, pro-IL1B processing and eventually secretion of the active cytokine. IL1B processing and secretion are temporarily associated.</text>
</comment>
<comment type="similarity">
    <text evidence="4">Belongs to the IL-1 family.</text>
</comment>
<accession>A4UYK8</accession>
<reference key="1">
    <citation type="submission" date="2007-04" db="EMBL/GenBank/DDBJ databases">
        <title>Mustela putorius furo interleukin-1 beta.</title>
        <authorList>
            <person name="Nakata M."/>
            <person name="Itou T."/>
            <person name="Sakai T."/>
        </authorList>
    </citation>
    <scope>NUCLEOTIDE SEQUENCE [MRNA]</scope>
</reference>
<keyword id="KW-0202">Cytokine</keyword>
<keyword id="KW-0963">Cytoplasm</keyword>
<keyword id="KW-0395">Inflammatory response</keyword>
<keyword id="KW-0458">Lysosome</keyword>
<keyword id="KW-0497">Mitogen</keyword>
<keyword id="KW-0666">Pyrogen</keyword>
<keyword id="KW-1185">Reference proteome</keyword>
<keyword id="KW-0964">Secreted</keyword>
<evidence type="ECO:0000250" key="1"/>
<evidence type="ECO:0000250" key="2">
    <source>
        <dbReference type="UniProtKB" id="P01584"/>
    </source>
</evidence>
<evidence type="ECO:0000250" key="3">
    <source>
        <dbReference type="UniProtKB" id="P10749"/>
    </source>
</evidence>
<evidence type="ECO:0000305" key="4"/>
<dbReference type="EMBL" id="AB301555">
    <property type="protein sequence ID" value="BAF56967.1"/>
    <property type="molecule type" value="mRNA"/>
</dbReference>
<dbReference type="RefSeq" id="NP_001297129.1">
    <property type="nucleotide sequence ID" value="NM_001310200.1"/>
</dbReference>
<dbReference type="RefSeq" id="XP_044934884.1">
    <property type="nucleotide sequence ID" value="XM_045078949.1"/>
</dbReference>
<dbReference type="SMR" id="A4UYK8"/>
<dbReference type="FunCoup" id="A4UYK8">
    <property type="interactions" value="5"/>
</dbReference>
<dbReference type="STRING" id="9669.ENSMPUP00000010696"/>
<dbReference type="GeneID" id="101688006"/>
<dbReference type="CTD" id="3553"/>
<dbReference type="eggNOG" id="ENOG502S3E9">
    <property type="taxonomic scope" value="Eukaryota"/>
</dbReference>
<dbReference type="HOGENOM" id="CLU_1590244_0_0_1"/>
<dbReference type="InParanoid" id="A4UYK8"/>
<dbReference type="OrthoDB" id="9449069at2759"/>
<dbReference type="Proteomes" id="UP000000715">
    <property type="component" value="Unplaced"/>
</dbReference>
<dbReference type="GO" id="GO:0005829">
    <property type="term" value="C:cytosol"/>
    <property type="evidence" value="ECO:0007669"/>
    <property type="project" value="UniProtKB-SubCell"/>
</dbReference>
<dbReference type="GO" id="GO:0005615">
    <property type="term" value="C:extracellular space"/>
    <property type="evidence" value="ECO:0007669"/>
    <property type="project" value="UniProtKB-KW"/>
</dbReference>
<dbReference type="GO" id="GO:0005764">
    <property type="term" value="C:lysosome"/>
    <property type="evidence" value="ECO:0007669"/>
    <property type="project" value="UniProtKB-SubCell"/>
</dbReference>
<dbReference type="GO" id="GO:0005125">
    <property type="term" value="F:cytokine activity"/>
    <property type="evidence" value="ECO:0007669"/>
    <property type="project" value="UniProtKB-KW"/>
</dbReference>
<dbReference type="GO" id="GO:0005178">
    <property type="term" value="F:integrin binding"/>
    <property type="evidence" value="ECO:0000250"/>
    <property type="project" value="UniProtKB"/>
</dbReference>
<dbReference type="GO" id="GO:0005149">
    <property type="term" value="F:interleukin-1 receptor binding"/>
    <property type="evidence" value="ECO:0007669"/>
    <property type="project" value="InterPro"/>
</dbReference>
<dbReference type="GO" id="GO:0071222">
    <property type="term" value="P:cellular response to lipopolysaccharide"/>
    <property type="evidence" value="ECO:0007669"/>
    <property type="project" value="TreeGrafter"/>
</dbReference>
<dbReference type="GO" id="GO:0019221">
    <property type="term" value="P:cytokine-mediated signaling pathway"/>
    <property type="evidence" value="ECO:0007669"/>
    <property type="project" value="TreeGrafter"/>
</dbReference>
<dbReference type="GO" id="GO:0001660">
    <property type="term" value="P:fever generation"/>
    <property type="evidence" value="ECO:0007669"/>
    <property type="project" value="UniProtKB-KW"/>
</dbReference>
<dbReference type="GO" id="GO:0006955">
    <property type="term" value="P:immune response"/>
    <property type="evidence" value="ECO:0007669"/>
    <property type="project" value="InterPro"/>
</dbReference>
<dbReference type="GO" id="GO:0051781">
    <property type="term" value="P:positive regulation of cell division"/>
    <property type="evidence" value="ECO:0007669"/>
    <property type="project" value="UniProtKB-KW"/>
</dbReference>
<dbReference type="GO" id="GO:0033092">
    <property type="term" value="P:positive regulation of immature T cell proliferation in thymus"/>
    <property type="evidence" value="ECO:0007669"/>
    <property type="project" value="TreeGrafter"/>
</dbReference>
<dbReference type="GO" id="GO:2000556">
    <property type="term" value="P:positive regulation of T-helper 1 cell cytokine production"/>
    <property type="evidence" value="ECO:0000250"/>
    <property type="project" value="UniProtKB"/>
</dbReference>
<dbReference type="GO" id="GO:0032729">
    <property type="term" value="P:positive regulation of type II interferon production"/>
    <property type="evidence" value="ECO:0000250"/>
    <property type="project" value="UniProtKB"/>
</dbReference>
<dbReference type="GO" id="GO:0010573">
    <property type="term" value="P:vascular endothelial growth factor production"/>
    <property type="evidence" value="ECO:0000250"/>
    <property type="project" value="UniProtKB"/>
</dbReference>
<dbReference type="CDD" id="cd23296">
    <property type="entry name" value="beta-trefoil_IL1B"/>
    <property type="match status" value="1"/>
</dbReference>
<dbReference type="FunFam" id="2.80.10.50:FF:000027">
    <property type="entry name" value="Interleukin-1 beta"/>
    <property type="match status" value="1"/>
</dbReference>
<dbReference type="Gene3D" id="2.80.10.50">
    <property type="match status" value="1"/>
</dbReference>
<dbReference type="InterPro" id="IPR020877">
    <property type="entry name" value="IL-1_CS"/>
</dbReference>
<dbReference type="InterPro" id="IPR000975">
    <property type="entry name" value="IL-1_fam"/>
</dbReference>
<dbReference type="InterPro" id="IPR003502">
    <property type="entry name" value="IL-1_propep"/>
</dbReference>
<dbReference type="InterPro" id="IPR008996">
    <property type="entry name" value="IL1/FGF"/>
</dbReference>
<dbReference type="PANTHER" id="PTHR10078:SF30">
    <property type="entry name" value="INTERLEUKIN-1 BETA"/>
    <property type="match status" value="1"/>
</dbReference>
<dbReference type="PANTHER" id="PTHR10078">
    <property type="entry name" value="INTERLEUKIN-1 FAMILY MEMBER"/>
    <property type="match status" value="1"/>
</dbReference>
<dbReference type="Pfam" id="PF00340">
    <property type="entry name" value="IL1"/>
    <property type="match status" value="1"/>
</dbReference>
<dbReference type="Pfam" id="PF02394">
    <property type="entry name" value="IL1_propep"/>
    <property type="match status" value="1"/>
</dbReference>
<dbReference type="PRINTS" id="PR00262">
    <property type="entry name" value="IL1HBGF"/>
</dbReference>
<dbReference type="PRINTS" id="PR00264">
    <property type="entry name" value="INTERLEUKIN1"/>
</dbReference>
<dbReference type="PRINTS" id="PR01359">
    <property type="entry name" value="INTRLEUKIN1B"/>
</dbReference>
<dbReference type="PRINTS" id="PR01357">
    <property type="entry name" value="INTRLEUKN1AB"/>
</dbReference>
<dbReference type="SMART" id="SM00125">
    <property type="entry name" value="IL1"/>
    <property type="match status" value="1"/>
</dbReference>
<dbReference type="SUPFAM" id="SSF50353">
    <property type="entry name" value="Cytokine"/>
    <property type="match status" value="1"/>
</dbReference>
<dbReference type="PROSITE" id="PS00253">
    <property type="entry name" value="INTERLEUKIN_1"/>
    <property type="match status" value="1"/>
</dbReference>
<protein>
    <recommendedName>
        <fullName>Interleukin-1 beta</fullName>
        <shortName>IL-1 beta</shortName>
    </recommendedName>
</protein>
<name>IL1B_MUSPF</name>
<sequence>MARVPEPTSEVMSYGYSDNENDLFFEADGPGKMKCCFQDLNNSYLEEEGIQLQISHQLHNKSLSHFVSVIVALEKLKKISVPCSLPLQGDDLMNVFHCIFEEEPIILEKCDDNAFVHDAPPRSLDCKFQDINQKSLVLYNSYELRALHLNGTSVNQQAVFRMTFVQEDEDITKIPVALCIKEKNLYLSCVMKDGKPTLQLEMLDPKVYPKKRMEKRFVFNKTEIKKKVEFESSQFPNWYISTSQAEAMPVFLGNNRGGHDITDFTMELSS</sequence>
<feature type="propeptide" id="PRO_0000311173" evidence="1">
    <location>
        <begin position="1"/>
        <end position="118"/>
    </location>
</feature>
<feature type="chain" id="PRO_5000237424" description="Interleukin-1 beta">
    <location>
        <begin position="119"/>
        <end position="270"/>
    </location>
</feature>
<feature type="site" description="Important for interaction with integrin" evidence="2">
    <location>
        <position position="173"/>
    </location>
</feature>
<feature type="site" description="Important for interaction with integrin" evidence="2">
    <location>
        <position position="181"/>
    </location>
</feature>
<feature type="site" description="Important for interaction with integrin" evidence="2">
    <location>
        <position position="183"/>
    </location>
</feature>
<feature type="site" description="Important for interaction with integrin" evidence="2">
    <location>
        <position position="192"/>
    </location>
</feature>
<feature type="site" description="Important for interaction with integrin" evidence="2">
    <location>
        <position position="206"/>
    </location>
</feature>
<organism>
    <name type="scientific">Mustela putorius furo</name>
    <name type="common">European domestic ferret</name>
    <name type="synonym">Mustela furo</name>
    <dbReference type="NCBI Taxonomy" id="9669"/>
    <lineage>
        <taxon>Eukaryota</taxon>
        <taxon>Metazoa</taxon>
        <taxon>Chordata</taxon>
        <taxon>Craniata</taxon>
        <taxon>Vertebrata</taxon>
        <taxon>Euteleostomi</taxon>
        <taxon>Mammalia</taxon>
        <taxon>Eutheria</taxon>
        <taxon>Laurasiatheria</taxon>
        <taxon>Carnivora</taxon>
        <taxon>Caniformia</taxon>
        <taxon>Musteloidea</taxon>
        <taxon>Mustelidae</taxon>
        <taxon>Mustelinae</taxon>
        <taxon>Mustela</taxon>
    </lineage>
</organism>